<organism>
    <name type="scientific">Mus musculus</name>
    <name type="common">Mouse</name>
    <dbReference type="NCBI Taxonomy" id="10090"/>
    <lineage>
        <taxon>Eukaryota</taxon>
        <taxon>Metazoa</taxon>
        <taxon>Chordata</taxon>
        <taxon>Craniata</taxon>
        <taxon>Vertebrata</taxon>
        <taxon>Euteleostomi</taxon>
        <taxon>Mammalia</taxon>
        <taxon>Eutheria</taxon>
        <taxon>Euarchontoglires</taxon>
        <taxon>Glires</taxon>
        <taxon>Rodentia</taxon>
        <taxon>Myomorpha</taxon>
        <taxon>Muroidea</taxon>
        <taxon>Muridae</taxon>
        <taxon>Murinae</taxon>
        <taxon>Mus</taxon>
        <taxon>Mus</taxon>
    </lineage>
</organism>
<keyword id="KW-0067">ATP-binding</keyword>
<keyword id="KW-0347">Helicase</keyword>
<keyword id="KW-0378">Hydrolase</keyword>
<keyword id="KW-0547">Nucleotide-binding</keyword>
<keyword id="KW-0597">Phosphoprotein</keyword>
<keyword id="KW-1185">Reference proteome</keyword>
<keyword id="KW-0694">RNA-binding</keyword>
<accession>Q9DBV3</accession>
<feature type="chain" id="PRO_0000055167" description="Probable ATP-dependent RNA helicase DHX34">
    <location>
        <begin position="1"/>
        <end position="1145"/>
    </location>
</feature>
<feature type="domain" description="Helicase ATP-binding" evidence="3">
    <location>
        <begin position="174"/>
        <end position="334"/>
    </location>
</feature>
<feature type="domain" description="Helicase C-terminal" evidence="4">
    <location>
        <begin position="370"/>
        <end position="538"/>
    </location>
</feature>
<feature type="region of interest" description="Disordered" evidence="5">
    <location>
        <begin position="1"/>
        <end position="27"/>
    </location>
</feature>
<feature type="region of interest" description="Disordered" evidence="5">
    <location>
        <begin position="726"/>
        <end position="764"/>
    </location>
</feature>
<feature type="region of interest" description="Disordered" evidence="5">
    <location>
        <begin position="1091"/>
        <end position="1114"/>
    </location>
</feature>
<feature type="short sequence motif" description="DEAH box">
    <location>
        <begin position="281"/>
        <end position="284"/>
    </location>
</feature>
<feature type="compositionally biased region" description="Basic and acidic residues" evidence="5">
    <location>
        <begin position="1"/>
        <end position="14"/>
    </location>
</feature>
<feature type="binding site" evidence="3">
    <location>
        <begin position="187"/>
        <end position="194"/>
    </location>
    <ligand>
        <name>ATP</name>
        <dbReference type="ChEBI" id="CHEBI:30616"/>
    </ligand>
</feature>
<feature type="modified residue" description="Phosphoserine" evidence="2">
    <location>
        <position position="749"/>
    </location>
</feature>
<feature type="modified residue" description="Phosphoserine" evidence="2">
    <location>
        <position position="750"/>
    </location>
</feature>
<feature type="sequence conflict" description="In Ref. 2; BAB23515." evidence="6" ref="2">
    <original>K</original>
    <variation>E</variation>
    <location>
        <position position="82"/>
    </location>
</feature>
<feature type="sequence conflict" description="In Ref. 2; BAB23515." evidence="6" ref="2">
    <original>A</original>
    <variation>V</variation>
    <location>
        <position position="155"/>
    </location>
</feature>
<feature type="sequence conflict" description="In Ref. 2; BAB23515." evidence="6" ref="2">
    <original>K</original>
    <variation>E</variation>
    <location>
        <position position="756"/>
    </location>
</feature>
<feature type="sequence conflict" description="In Ref. 2; BAB23515." evidence="6" ref="2">
    <original>A</original>
    <variation>V</variation>
    <location>
        <position position="948"/>
    </location>
</feature>
<feature type="sequence conflict" description="In Ref. 2; BAB23515." evidence="6" ref="2">
    <original>V</original>
    <variation>M</variation>
    <location>
        <position position="973"/>
    </location>
</feature>
<feature type="sequence conflict" description="In Ref. 2; BAB23515." evidence="6" ref="2">
    <original>A</original>
    <variation>V</variation>
    <location>
        <position position="995"/>
    </location>
</feature>
<sequence length="1145" mass="128507">MPPPRTREGRGHRDRDHHRAPREEEAPEKWDWNCPETRCLLEDVFFRDEDYIRRGSEECQKFWAFFERLQRFQHLKTSQKKKKDPGMPKHGIAALADLPLTYDPRYRINLSILSPDTRGRHGPGRGLPPERVSEFRRALLHYLDFQQKQAFGRLAKLQRERAALPIAQYGNRILQTLKEHQVVVVAGDTGCGKSTQVPQYLLAAGFSHVACTQPRRIACISLAKRVGFESLSQYGSQVGYQIRFESTRSAATKIVFLTVGLLLRQIQREPSLPQYQVLIVDEVHERHLHNDFLLGVLQRLLPQRPDLKVILMSATINISLFSSYFSHAPVVQVPGRLFPITVVYQPQEADQTASKSEKLDPRPFLRVLEAIDNKYPPEERGDLLVFLSGMAEITTVLDAAQAYASLTQRWVVLPLHSALSVSDQDKVFDVAPAGVRKCILSTNIAETSVTIDGIRFVVDSGKVKEMSYDPQAKLQRLQEFWISQASAEQRKGRAGRTGPGVCYRLYAESDYDAFAPYPVPEIRRVALDALVLQMKSMSVGDPRTFPFIEPPPPASVETAILYLQEQGALDSSEALTPIGSLLAQLPVDVVIGKMLILGSMFSLAEPVLTIAAALSVQSPFTRSAQSNLDCATARRPLESDQGDPFTLFNVFNAWVQVKSERSGNSRKWCRRRGVEEHRLYEMANLRRQFKELLEDHGLLSGAQVVAPGDSYSRLQQRRERRALHQLKRQHEEGGGRRRKVLRLQEDGCSSDEEDRKGSTSQRADSVDIQDVKFKLRHNLEQLQAAASSAQDLTRDQLALLKLVLGRGLYPQLAVPDAFNSGRKDSDQIFHTQAKQGTVLHPTCVFANSPEVLHTQGQEASGQEGSQDGRDQMSCKHQLLAFVSLLETNKPYLVNCVRIPALQSLLLFSRSIDTNGDCSRLVADGWLELQLADSESAVRLLATSLRLRAHWESALDRQLARQAQRRKLEQEEDVGSPAVSPQEVAALSRELLQFMAAKVPYRLRRLTGLEAQNLYVGPQTITTAPSLPGLFGNSTLSPHPTKGGYAVSDYLTYNCLTSDTDLYSDCLRSFWTCPHCGLHMPFTPLERIAHENTCPEAPGDDPGSEEAAPAPPQKTSALQRPYHCQVCGQDFLFTPTEVLRHRRQHV</sequence>
<proteinExistence type="evidence at protein level"/>
<gene>
    <name evidence="7" type="primary">Dhx34</name>
    <name evidence="7" type="synonym">Ddx34</name>
    <name type="synonym">Kiaa0134</name>
</gene>
<evidence type="ECO:0000250" key="1">
    <source>
        <dbReference type="UniProtKB" id="A2BIE5"/>
    </source>
</evidence>
<evidence type="ECO:0000250" key="2">
    <source>
        <dbReference type="UniProtKB" id="Q14147"/>
    </source>
</evidence>
<evidence type="ECO:0000255" key="3">
    <source>
        <dbReference type="PROSITE-ProRule" id="PRU00541"/>
    </source>
</evidence>
<evidence type="ECO:0000255" key="4">
    <source>
        <dbReference type="PROSITE-ProRule" id="PRU00542"/>
    </source>
</evidence>
<evidence type="ECO:0000256" key="5">
    <source>
        <dbReference type="SAM" id="MobiDB-lite"/>
    </source>
</evidence>
<evidence type="ECO:0000305" key="6"/>
<evidence type="ECO:0000312" key="7">
    <source>
        <dbReference type="MGI" id="MGI:1918973"/>
    </source>
</evidence>
<comment type="function">
    <text evidence="1 2">Probable ATP-binding RNA helicase (By similarity). Required for nonsense-mediated decay (NMD) degradation of mRNA transcripts containing premature stop codons (By similarity). Promotes the phosphorylation of UPF1 along with its interaction with key NMD pathway proteins UPF2 and EIF4A3 (By similarity). Negatively regulates the nucleotide binding ability and ATP hydrolysis of the RUVBL1-RUVBL2 complex via induction of N-terminus conformation changes of the RUVBL2 subunits (By similarity).</text>
</comment>
<comment type="catalytic activity">
    <reaction>
        <text>ATP + H2O = ADP + phosphate + H(+)</text>
        <dbReference type="Rhea" id="RHEA:13065"/>
        <dbReference type="ChEBI" id="CHEBI:15377"/>
        <dbReference type="ChEBI" id="CHEBI:15378"/>
        <dbReference type="ChEBI" id="CHEBI:30616"/>
        <dbReference type="ChEBI" id="CHEBI:43474"/>
        <dbReference type="ChEBI" id="CHEBI:456216"/>
        <dbReference type="EC" id="3.6.4.13"/>
    </reaction>
</comment>
<comment type="subunit">
    <text evidence="2">Forms a complex with RUVBL1 and RUVBL2 (By similarity). Part of a complex composed of SMG1, DHX34 and UPF1; within the complex DHX34 acts as a scaffolding protein to facilitate SMG1 phosphorylation of UPF1 (By similarity). Interacts with UPF1, MOV10, EIF4A3, XRN2, SMG6, SMG7, SMG9, UPF3A, UPF3B, CASC3/MLN51, XRN1, DIS3 and DCP1A; the interactions are RNA-independent (By similarity). Interacts with NCBP1/CPB80; the interaction is RNA-dependent (By similarity). Interacts (via C-terminus) with SMG1; the interaction is RNA-independent (By similarity).</text>
</comment>
<comment type="similarity">
    <text evidence="6">Belongs to the DEAD box helicase family. DEAH subfamily.</text>
</comment>
<comment type="sequence caution" evidence="6">
    <conflict type="erroneous initiation">
        <sequence resource="EMBL-CDS" id="BAC97872"/>
    </conflict>
    <text>Extended N-terminus.</text>
</comment>
<protein>
    <recommendedName>
        <fullName evidence="6">Probable ATP-dependent RNA helicase DHX34</fullName>
        <ecNumber>3.6.4.13</ecNumber>
    </recommendedName>
    <alternativeName>
        <fullName evidence="7">DEAH box protein 34</fullName>
    </alternativeName>
    <alternativeName>
        <fullName evidence="2">DExH-box helicase 34</fullName>
    </alternativeName>
</protein>
<name>DHX34_MOUSE</name>
<reference key="1">
    <citation type="journal article" date="2003" name="DNA Res.">
        <title>Prediction of the coding sequences of mouse homologues of KIAA gene: III. The complete nucleotide sequences of 500 mouse KIAA-homologous cDNAs identified by screening of terminal sequences of cDNA clones randomly sampled from size-fractionated libraries.</title>
        <authorList>
            <person name="Okazaki N."/>
            <person name="Kikuno R."/>
            <person name="Ohara R."/>
            <person name="Inamoto S."/>
            <person name="Koseki H."/>
            <person name="Hiraoka S."/>
            <person name="Saga Y."/>
            <person name="Nagase T."/>
            <person name="Ohara O."/>
            <person name="Koga H."/>
        </authorList>
    </citation>
    <scope>NUCLEOTIDE SEQUENCE [LARGE SCALE MRNA]</scope>
    <source>
        <tissue>Brain</tissue>
    </source>
</reference>
<reference key="2">
    <citation type="journal article" date="2005" name="Science">
        <title>The transcriptional landscape of the mammalian genome.</title>
        <authorList>
            <person name="Carninci P."/>
            <person name="Kasukawa T."/>
            <person name="Katayama S."/>
            <person name="Gough J."/>
            <person name="Frith M.C."/>
            <person name="Maeda N."/>
            <person name="Oyama R."/>
            <person name="Ravasi T."/>
            <person name="Lenhard B."/>
            <person name="Wells C."/>
            <person name="Kodzius R."/>
            <person name="Shimokawa K."/>
            <person name="Bajic V.B."/>
            <person name="Brenner S.E."/>
            <person name="Batalov S."/>
            <person name="Forrest A.R."/>
            <person name="Zavolan M."/>
            <person name="Davis M.J."/>
            <person name="Wilming L.G."/>
            <person name="Aidinis V."/>
            <person name="Allen J.E."/>
            <person name="Ambesi-Impiombato A."/>
            <person name="Apweiler R."/>
            <person name="Aturaliya R.N."/>
            <person name="Bailey T.L."/>
            <person name="Bansal M."/>
            <person name="Baxter L."/>
            <person name="Beisel K.W."/>
            <person name="Bersano T."/>
            <person name="Bono H."/>
            <person name="Chalk A.M."/>
            <person name="Chiu K.P."/>
            <person name="Choudhary V."/>
            <person name="Christoffels A."/>
            <person name="Clutterbuck D.R."/>
            <person name="Crowe M.L."/>
            <person name="Dalla E."/>
            <person name="Dalrymple B.P."/>
            <person name="de Bono B."/>
            <person name="Della Gatta G."/>
            <person name="di Bernardo D."/>
            <person name="Down T."/>
            <person name="Engstrom P."/>
            <person name="Fagiolini M."/>
            <person name="Faulkner G."/>
            <person name="Fletcher C.F."/>
            <person name="Fukushima T."/>
            <person name="Furuno M."/>
            <person name="Futaki S."/>
            <person name="Gariboldi M."/>
            <person name="Georgii-Hemming P."/>
            <person name="Gingeras T.R."/>
            <person name="Gojobori T."/>
            <person name="Green R.E."/>
            <person name="Gustincich S."/>
            <person name="Harbers M."/>
            <person name="Hayashi Y."/>
            <person name="Hensch T.K."/>
            <person name="Hirokawa N."/>
            <person name="Hill D."/>
            <person name="Huminiecki L."/>
            <person name="Iacono M."/>
            <person name="Ikeo K."/>
            <person name="Iwama A."/>
            <person name="Ishikawa T."/>
            <person name="Jakt M."/>
            <person name="Kanapin A."/>
            <person name="Katoh M."/>
            <person name="Kawasawa Y."/>
            <person name="Kelso J."/>
            <person name="Kitamura H."/>
            <person name="Kitano H."/>
            <person name="Kollias G."/>
            <person name="Krishnan S.P."/>
            <person name="Kruger A."/>
            <person name="Kummerfeld S.K."/>
            <person name="Kurochkin I.V."/>
            <person name="Lareau L.F."/>
            <person name="Lazarevic D."/>
            <person name="Lipovich L."/>
            <person name="Liu J."/>
            <person name="Liuni S."/>
            <person name="McWilliam S."/>
            <person name="Madan Babu M."/>
            <person name="Madera M."/>
            <person name="Marchionni L."/>
            <person name="Matsuda H."/>
            <person name="Matsuzawa S."/>
            <person name="Miki H."/>
            <person name="Mignone F."/>
            <person name="Miyake S."/>
            <person name="Morris K."/>
            <person name="Mottagui-Tabar S."/>
            <person name="Mulder N."/>
            <person name="Nakano N."/>
            <person name="Nakauchi H."/>
            <person name="Ng P."/>
            <person name="Nilsson R."/>
            <person name="Nishiguchi S."/>
            <person name="Nishikawa S."/>
            <person name="Nori F."/>
            <person name="Ohara O."/>
            <person name="Okazaki Y."/>
            <person name="Orlando V."/>
            <person name="Pang K.C."/>
            <person name="Pavan W.J."/>
            <person name="Pavesi G."/>
            <person name="Pesole G."/>
            <person name="Petrovsky N."/>
            <person name="Piazza S."/>
            <person name="Reed J."/>
            <person name="Reid J.F."/>
            <person name="Ring B.Z."/>
            <person name="Ringwald M."/>
            <person name="Rost B."/>
            <person name="Ruan Y."/>
            <person name="Salzberg S.L."/>
            <person name="Sandelin A."/>
            <person name="Schneider C."/>
            <person name="Schoenbach C."/>
            <person name="Sekiguchi K."/>
            <person name="Semple C.A."/>
            <person name="Seno S."/>
            <person name="Sessa L."/>
            <person name="Sheng Y."/>
            <person name="Shibata Y."/>
            <person name="Shimada H."/>
            <person name="Shimada K."/>
            <person name="Silva D."/>
            <person name="Sinclair B."/>
            <person name="Sperling S."/>
            <person name="Stupka E."/>
            <person name="Sugiura K."/>
            <person name="Sultana R."/>
            <person name="Takenaka Y."/>
            <person name="Taki K."/>
            <person name="Tammoja K."/>
            <person name="Tan S.L."/>
            <person name="Tang S."/>
            <person name="Taylor M.S."/>
            <person name="Tegner J."/>
            <person name="Teichmann S.A."/>
            <person name="Ueda H.R."/>
            <person name="van Nimwegen E."/>
            <person name="Verardo R."/>
            <person name="Wei C.L."/>
            <person name="Yagi K."/>
            <person name="Yamanishi H."/>
            <person name="Zabarovsky E."/>
            <person name="Zhu S."/>
            <person name="Zimmer A."/>
            <person name="Hide W."/>
            <person name="Bult C."/>
            <person name="Grimmond S.M."/>
            <person name="Teasdale R.D."/>
            <person name="Liu E.T."/>
            <person name="Brusic V."/>
            <person name="Quackenbush J."/>
            <person name="Wahlestedt C."/>
            <person name="Mattick J.S."/>
            <person name="Hume D.A."/>
            <person name="Kai C."/>
            <person name="Sasaki D."/>
            <person name="Tomaru Y."/>
            <person name="Fukuda S."/>
            <person name="Kanamori-Katayama M."/>
            <person name="Suzuki M."/>
            <person name="Aoki J."/>
            <person name="Arakawa T."/>
            <person name="Iida J."/>
            <person name="Imamura K."/>
            <person name="Itoh M."/>
            <person name="Kato T."/>
            <person name="Kawaji H."/>
            <person name="Kawagashira N."/>
            <person name="Kawashima T."/>
            <person name="Kojima M."/>
            <person name="Kondo S."/>
            <person name="Konno H."/>
            <person name="Nakano K."/>
            <person name="Ninomiya N."/>
            <person name="Nishio T."/>
            <person name="Okada M."/>
            <person name="Plessy C."/>
            <person name="Shibata K."/>
            <person name="Shiraki T."/>
            <person name="Suzuki S."/>
            <person name="Tagami M."/>
            <person name="Waki K."/>
            <person name="Watahiki A."/>
            <person name="Okamura-Oho Y."/>
            <person name="Suzuki H."/>
            <person name="Kawai J."/>
            <person name="Hayashizaki Y."/>
        </authorList>
    </citation>
    <scope>NUCLEOTIDE SEQUENCE [LARGE SCALE MRNA]</scope>
    <source>
        <strain>C57BL/6J</strain>
        <tissue>Lung</tissue>
    </source>
</reference>
<reference key="3">
    <citation type="journal article" date="2010" name="Cell">
        <title>A tissue-specific atlas of mouse protein phosphorylation and expression.</title>
        <authorList>
            <person name="Huttlin E.L."/>
            <person name="Jedrychowski M.P."/>
            <person name="Elias J.E."/>
            <person name="Goswami T."/>
            <person name="Rad R."/>
            <person name="Beausoleil S.A."/>
            <person name="Villen J."/>
            <person name="Haas W."/>
            <person name="Sowa M.E."/>
            <person name="Gygi S.P."/>
        </authorList>
    </citation>
    <scope>IDENTIFICATION BY MASS SPECTROMETRY [LARGE SCALE ANALYSIS]</scope>
    <source>
        <tissue>Spleen</tissue>
    </source>
</reference>
<dbReference type="EC" id="3.6.4.13"/>
<dbReference type="EMBL" id="AK129062">
    <property type="protein sequence ID" value="BAC97872.1"/>
    <property type="status" value="ALT_INIT"/>
    <property type="molecule type" value="mRNA"/>
</dbReference>
<dbReference type="EMBL" id="AK004733">
    <property type="protein sequence ID" value="BAB23515.1"/>
    <property type="molecule type" value="mRNA"/>
</dbReference>
<dbReference type="CCDS" id="CCDS39783.1"/>
<dbReference type="RefSeq" id="NP_001272860.1">
    <property type="nucleotide sequence ID" value="NM_001285931.1"/>
</dbReference>
<dbReference type="RefSeq" id="NP_001272861.1">
    <property type="nucleotide sequence ID" value="NM_001285932.1"/>
</dbReference>
<dbReference type="RefSeq" id="NP_082159.3">
    <property type="nucleotide sequence ID" value="NM_027883.3"/>
</dbReference>
<dbReference type="RefSeq" id="XP_006540432.1">
    <property type="nucleotide sequence ID" value="XM_006540369.3"/>
</dbReference>
<dbReference type="RefSeq" id="XP_017167800.1">
    <property type="nucleotide sequence ID" value="XM_017312311.1"/>
</dbReference>
<dbReference type="SMR" id="Q9DBV3"/>
<dbReference type="FunCoup" id="Q9DBV3">
    <property type="interactions" value="517"/>
</dbReference>
<dbReference type="STRING" id="10090.ENSMUSP00000092410"/>
<dbReference type="iPTMnet" id="Q9DBV3"/>
<dbReference type="PhosphoSitePlus" id="Q9DBV3"/>
<dbReference type="PaxDb" id="10090-ENSMUSP00000113393"/>
<dbReference type="ProteomicsDB" id="279532"/>
<dbReference type="DNASU" id="71723"/>
<dbReference type="GeneID" id="71723"/>
<dbReference type="KEGG" id="mmu:71723"/>
<dbReference type="AGR" id="MGI:1918973"/>
<dbReference type="CTD" id="9704"/>
<dbReference type="MGI" id="MGI:1918973">
    <property type="gene designation" value="Dhx34"/>
</dbReference>
<dbReference type="eggNOG" id="KOG0922">
    <property type="taxonomic scope" value="Eukaryota"/>
</dbReference>
<dbReference type="InParanoid" id="Q9DBV3"/>
<dbReference type="OrthoDB" id="3363059at2759"/>
<dbReference type="BioGRID-ORCS" id="71723">
    <property type="hits" value="1 hit in 81 CRISPR screens"/>
</dbReference>
<dbReference type="ChiTaRS" id="Dhx34">
    <property type="organism name" value="mouse"/>
</dbReference>
<dbReference type="PRO" id="PR:Q9DBV3"/>
<dbReference type="Proteomes" id="UP000000589">
    <property type="component" value="Unplaced"/>
</dbReference>
<dbReference type="RNAct" id="Q9DBV3">
    <property type="molecule type" value="protein"/>
</dbReference>
<dbReference type="GO" id="GO:0005524">
    <property type="term" value="F:ATP binding"/>
    <property type="evidence" value="ECO:0007669"/>
    <property type="project" value="UniProtKB-KW"/>
</dbReference>
<dbReference type="GO" id="GO:0016887">
    <property type="term" value="F:ATP hydrolysis activity"/>
    <property type="evidence" value="ECO:0000250"/>
    <property type="project" value="UniProtKB"/>
</dbReference>
<dbReference type="GO" id="GO:0003723">
    <property type="term" value="F:RNA binding"/>
    <property type="evidence" value="ECO:0007669"/>
    <property type="project" value="UniProtKB-KW"/>
</dbReference>
<dbReference type="GO" id="GO:0003724">
    <property type="term" value="F:RNA helicase activity"/>
    <property type="evidence" value="ECO:0007669"/>
    <property type="project" value="UniProtKB-EC"/>
</dbReference>
<dbReference type="GO" id="GO:0042327">
    <property type="term" value="P:positive regulation of phosphorylation"/>
    <property type="evidence" value="ECO:0000250"/>
    <property type="project" value="UniProtKB"/>
</dbReference>
<dbReference type="CDD" id="cd17979">
    <property type="entry name" value="DEXHc_DHX34"/>
    <property type="match status" value="1"/>
</dbReference>
<dbReference type="CDD" id="cd18791">
    <property type="entry name" value="SF2_C_RHA"/>
    <property type="match status" value="1"/>
</dbReference>
<dbReference type="FunFam" id="1.20.120.1080:FF:000056">
    <property type="entry name" value="probable ATP-dependent RNA helicase DHX34"/>
    <property type="match status" value="1"/>
</dbReference>
<dbReference type="FunFam" id="3.40.50.300:FF:000540">
    <property type="entry name" value="probable ATP-dependent RNA helicase DHX34"/>
    <property type="match status" value="1"/>
</dbReference>
<dbReference type="FunFam" id="3.40.50.300:FF:000725">
    <property type="entry name" value="probable ATP-dependent RNA helicase DHX34"/>
    <property type="match status" value="1"/>
</dbReference>
<dbReference type="Gene3D" id="1.20.120.1080">
    <property type="match status" value="1"/>
</dbReference>
<dbReference type="Gene3D" id="3.40.50.300">
    <property type="entry name" value="P-loop containing nucleotide triphosphate hydrolases"/>
    <property type="match status" value="2"/>
</dbReference>
<dbReference type="InterPro" id="IPR011709">
    <property type="entry name" value="DEAD-box_helicase_OB_fold"/>
</dbReference>
<dbReference type="InterPro" id="IPR011545">
    <property type="entry name" value="DEAD/DEAH_box_helicase_dom"/>
</dbReference>
<dbReference type="InterPro" id="IPR056382">
    <property type="entry name" value="DHX34_Znf-C2H2"/>
</dbReference>
<dbReference type="InterPro" id="IPR048333">
    <property type="entry name" value="HA2_WH"/>
</dbReference>
<dbReference type="InterPro" id="IPR007502">
    <property type="entry name" value="Helicase-assoc_dom"/>
</dbReference>
<dbReference type="InterPro" id="IPR014001">
    <property type="entry name" value="Helicase_ATP-bd"/>
</dbReference>
<dbReference type="InterPro" id="IPR001650">
    <property type="entry name" value="Helicase_C-like"/>
</dbReference>
<dbReference type="InterPro" id="IPR027417">
    <property type="entry name" value="P-loop_NTPase"/>
</dbReference>
<dbReference type="PANTHER" id="PTHR18934">
    <property type="entry name" value="ATP-DEPENDENT RNA HELICASE"/>
    <property type="match status" value="1"/>
</dbReference>
<dbReference type="PANTHER" id="PTHR18934:SF221">
    <property type="entry name" value="ATP-DEPENDENT RNA HELICASE DHX34-RELATED"/>
    <property type="match status" value="1"/>
</dbReference>
<dbReference type="Pfam" id="PF00270">
    <property type="entry name" value="DEAD"/>
    <property type="match status" value="1"/>
</dbReference>
<dbReference type="Pfam" id="PF21010">
    <property type="entry name" value="HA2_C"/>
    <property type="match status" value="1"/>
</dbReference>
<dbReference type="Pfam" id="PF04408">
    <property type="entry name" value="HA2_N"/>
    <property type="match status" value="1"/>
</dbReference>
<dbReference type="Pfam" id="PF00271">
    <property type="entry name" value="Helicase_C"/>
    <property type="match status" value="1"/>
</dbReference>
<dbReference type="Pfam" id="PF07717">
    <property type="entry name" value="OB_NTP_bind"/>
    <property type="match status" value="1"/>
</dbReference>
<dbReference type="Pfam" id="PF24485">
    <property type="entry name" value="zf-C2H2_DHX34"/>
    <property type="match status" value="1"/>
</dbReference>
<dbReference type="SMART" id="SM00487">
    <property type="entry name" value="DEXDc"/>
    <property type="match status" value="1"/>
</dbReference>
<dbReference type="SMART" id="SM00847">
    <property type="entry name" value="HA2"/>
    <property type="match status" value="1"/>
</dbReference>
<dbReference type="SMART" id="SM00490">
    <property type="entry name" value="HELICc"/>
    <property type="match status" value="1"/>
</dbReference>
<dbReference type="SUPFAM" id="SSF52540">
    <property type="entry name" value="P-loop containing nucleoside triphosphate hydrolases"/>
    <property type="match status" value="1"/>
</dbReference>
<dbReference type="PROSITE" id="PS51192">
    <property type="entry name" value="HELICASE_ATP_BIND_1"/>
    <property type="match status" value="1"/>
</dbReference>
<dbReference type="PROSITE" id="PS51194">
    <property type="entry name" value="HELICASE_CTER"/>
    <property type="match status" value="1"/>
</dbReference>